<name>PHNX_SALPA</name>
<accession>Q5PFR1</accession>
<dbReference type="EC" id="3.11.1.1" evidence="1"/>
<dbReference type="EMBL" id="CP000026">
    <property type="protein sequence ID" value="AAV78176.1"/>
    <property type="molecule type" value="Genomic_DNA"/>
</dbReference>
<dbReference type="RefSeq" id="WP_011233114.1">
    <property type="nucleotide sequence ID" value="NC_006511.1"/>
</dbReference>
<dbReference type="SMR" id="Q5PFR1"/>
<dbReference type="KEGG" id="spt:SPA2291"/>
<dbReference type="HOGENOM" id="CLU_045011_12_0_6"/>
<dbReference type="Proteomes" id="UP000008185">
    <property type="component" value="Chromosome"/>
</dbReference>
<dbReference type="GO" id="GO:0005829">
    <property type="term" value="C:cytosol"/>
    <property type="evidence" value="ECO:0007669"/>
    <property type="project" value="TreeGrafter"/>
</dbReference>
<dbReference type="GO" id="GO:0000287">
    <property type="term" value="F:magnesium ion binding"/>
    <property type="evidence" value="ECO:0007669"/>
    <property type="project" value="UniProtKB-UniRule"/>
</dbReference>
<dbReference type="GO" id="GO:0008967">
    <property type="term" value="F:phosphoglycolate phosphatase activity"/>
    <property type="evidence" value="ECO:0007669"/>
    <property type="project" value="TreeGrafter"/>
</dbReference>
<dbReference type="GO" id="GO:0050194">
    <property type="term" value="F:phosphonoacetaldehyde hydrolase activity"/>
    <property type="evidence" value="ECO:0007669"/>
    <property type="project" value="UniProtKB-UniRule"/>
</dbReference>
<dbReference type="GO" id="GO:0006281">
    <property type="term" value="P:DNA repair"/>
    <property type="evidence" value="ECO:0007669"/>
    <property type="project" value="TreeGrafter"/>
</dbReference>
<dbReference type="GO" id="GO:0019700">
    <property type="term" value="P:organic phosphonate catabolic process"/>
    <property type="evidence" value="ECO:0007669"/>
    <property type="project" value="InterPro"/>
</dbReference>
<dbReference type="CDD" id="cd02586">
    <property type="entry name" value="HAD_PHN"/>
    <property type="match status" value="1"/>
</dbReference>
<dbReference type="FunFam" id="1.10.150.240:FF:000006">
    <property type="entry name" value="Phosphonoacetaldehyde hydrolase"/>
    <property type="match status" value="1"/>
</dbReference>
<dbReference type="FunFam" id="3.40.50.1000:FF:000072">
    <property type="entry name" value="Phosphonoacetaldehyde hydrolase"/>
    <property type="match status" value="1"/>
</dbReference>
<dbReference type="Gene3D" id="3.40.50.1000">
    <property type="entry name" value="HAD superfamily/HAD-like"/>
    <property type="match status" value="1"/>
</dbReference>
<dbReference type="Gene3D" id="1.10.150.240">
    <property type="entry name" value="Putative phosphatase, domain 2"/>
    <property type="match status" value="1"/>
</dbReference>
<dbReference type="HAMAP" id="MF_01375">
    <property type="entry name" value="PhnX"/>
    <property type="match status" value="1"/>
</dbReference>
<dbReference type="InterPro" id="IPR050155">
    <property type="entry name" value="HAD-like_hydrolase_sf"/>
</dbReference>
<dbReference type="InterPro" id="IPR036412">
    <property type="entry name" value="HAD-like_sf"/>
</dbReference>
<dbReference type="InterPro" id="IPR006439">
    <property type="entry name" value="HAD-SF_hydro_IA"/>
</dbReference>
<dbReference type="InterPro" id="IPR023214">
    <property type="entry name" value="HAD_sf"/>
</dbReference>
<dbReference type="InterPro" id="IPR023198">
    <property type="entry name" value="PGP-like_dom2"/>
</dbReference>
<dbReference type="InterPro" id="IPR006323">
    <property type="entry name" value="Phosphonoacetald_hydro"/>
</dbReference>
<dbReference type="NCBIfam" id="TIGR01509">
    <property type="entry name" value="HAD-SF-IA-v3"/>
    <property type="match status" value="1"/>
</dbReference>
<dbReference type="NCBIfam" id="TIGR01422">
    <property type="entry name" value="phosphonatase"/>
    <property type="match status" value="1"/>
</dbReference>
<dbReference type="PANTHER" id="PTHR43434">
    <property type="entry name" value="PHOSPHOGLYCOLATE PHOSPHATASE"/>
    <property type="match status" value="1"/>
</dbReference>
<dbReference type="PANTHER" id="PTHR43434:SF19">
    <property type="entry name" value="PHOSPHONOACETALDEHYDE HYDROLASE"/>
    <property type="match status" value="1"/>
</dbReference>
<dbReference type="Pfam" id="PF00702">
    <property type="entry name" value="Hydrolase"/>
    <property type="match status" value="1"/>
</dbReference>
<dbReference type="SFLD" id="SFLDS00003">
    <property type="entry name" value="Haloacid_Dehalogenase"/>
    <property type="match status" value="1"/>
</dbReference>
<dbReference type="SFLD" id="SFLDF00038">
    <property type="entry name" value="phosphonoacetaldehyde_hydrolas"/>
    <property type="match status" value="1"/>
</dbReference>
<dbReference type="SUPFAM" id="SSF56784">
    <property type="entry name" value="HAD-like"/>
    <property type="match status" value="1"/>
</dbReference>
<reference key="1">
    <citation type="journal article" date="2004" name="Nat. Genet.">
        <title>Comparison of genome degradation in Paratyphi A and Typhi, human-restricted serovars of Salmonella enterica that cause typhoid.</title>
        <authorList>
            <person name="McClelland M."/>
            <person name="Sanderson K.E."/>
            <person name="Clifton S.W."/>
            <person name="Latreille P."/>
            <person name="Porwollik S."/>
            <person name="Sabo A."/>
            <person name="Meyer R."/>
            <person name="Bieri T."/>
            <person name="Ozersky P."/>
            <person name="McLellan M."/>
            <person name="Harkins C.R."/>
            <person name="Wang C."/>
            <person name="Nguyen C."/>
            <person name="Berghoff A."/>
            <person name="Elliott G."/>
            <person name="Kohlberg S."/>
            <person name="Strong C."/>
            <person name="Du F."/>
            <person name="Carter J."/>
            <person name="Kremizki C."/>
            <person name="Layman D."/>
            <person name="Leonard S."/>
            <person name="Sun H."/>
            <person name="Fulton L."/>
            <person name="Nash W."/>
            <person name="Miner T."/>
            <person name="Minx P."/>
            <person name="Delehaunty K."/>
            <person name="Fronick C."/>
            <person name="Magrini V."/>
            <person name="Nhan M."/>
            <person name="Warren W."/>
            <person name="Florea L."/>
            <person name="Spieth J."/>
            <person name="Wilson R.K."/>
        </authorList>
    </citation>
    <scope>NUCLEOTIDE SEQUENCE [LARGE SCALE GENOMIC DNA]</scope>
    <source>
        <strain>ATCC 9150 / SARB42</strain>
    </source>
</reference>
<evidence type="ECO:0000255" key="1">
    <source>
        <dbReference type="HAMAP-Rule" id="MF_01375"/>
    </source>
</evidence>
<comment type="function">
    <text evidence="1">Involved in phosphonate degradation.</text>
</comment>
<comment type="catalytic activity">
    <reaction evidence="1">
        <text>phosphonoacetaldehyde + H2O = acetaldehyde + phosphate + H(+)</text>
        <dbReference type="Rhea" id="RHEA:18905"/>
        <dbReference type="ChEBI" id="CHEBI:15343"/>
        <dbReference type="ChEBI" id="CHEBI:15377"/>
        <dbReference type="ChEBI" id="CHEBI:15378"/>
        <dbReference type="ChEBI" id="CHEBI:43474"/>
        <dbReference type="ChEBI" id="CHEBI:58383"/>
        <dbReference type="EC" id="3.11.1.1"/>
    </reaction>
</comment>
<comment type="cofactor">
    <cofactor evidence="1">
        <name>Mg(2+)</name>
        <dbReference type="ChEBI" id="CHEBI:18420"/>
    </cofactor>
    <text evidence="1">Binds 1 Mg(2+) ion per subunit.</text>
</comment>
<comment type="subunit">
    <text evidence="1">Homodimer.</text>
</comment>
<comment type="similarity">
    <text evidence="1">Belongs to the HAD-like hydrolase superfamily. PhnX family.</text>
</comment>
<sequence>MNRIHAVILDWAGTTVDFGSFAPTQIFVEAFRQAFDVEITLAEARVPMGLGKWQHIEALGKLPAVDARWQAKFGRAMSAADIDAIYAAFMPLQIAKVVDFSSPIAGVIDTIATLRAEGIKIGSCSGYPRAVMERLVPAAAGHGYCPDHWVATDDLAAGGRPGPWMALQNVIALGIDAVAHCVKVDDAAPGISEGLNAGMWTVGLAVSGNEFGATWDAYQTMSKEDVAVRREHAASKLYAAGAHYVVDSLADLPGVIAHINARLAQGERP</sequence>
<feature type="chain" id="PRO_0000284599" description="Phosphonoacetaldehyde hydrolase">
    <location>
        <begin position="1"/>
        <end position="269"/>
    </location>
</feature>
<feature type="active site" description="Nucleophile" evidence="1">
    <location>
        <position position="10"/>
    </location>
</feature>
<feature type="active site" description="Schiff-base intermediate with substrate" evidence="1">
    <location>
        <position position="52"/>
    </location>
</feature>
<feature type="binding site" evidence="1">
    <location>
        <position position="10"/>
    </location>
    <ligand>
        <name>Mg(2+)</name>
        <dbReference type="ChEBI" id="CHEBI:18420"/>
    </ligand>
</feature>
<feature type="binding site" evidence="1">
    <location>
        <position position="12"/>
    </location>
    <ligand>
        <name>Mg(2+)</name>
        <dbReference type="ChEBI" id="CHEBI:18420"/>
    </ligand>
</feature>
<feature type="binding site" evidence="1">
    <location>
        <position position="186"/>
    </location>
    <ligand>
        <name>Mg(2+)</name>
        <dbReference type="ChEBI" id="CHEBI:18420"/>
    </ligand>
</feature>
<proteinExistence type="inferred from homology"/>
<gene>
    <name evidence="1" type="primary">phnX</name>
    <name type="ordered locus">SPA2291</name>
</gene>
<keyword id="KW-0378">Hydrolase</keyword>
<keyword id="KW-0460">Magnesium</keyword>
<keyword id="KW-0479">Metal-binding</keyword>
<keyword id="KW-0704">Schiff base</keyword>
<protein>
    <recommendedName>
        <fullName evidence="1">Phosphonoacetaldehyde hydrolase</fullName>
        <shortName evidence="1">Phosphonatase</shortName>
        <ecNumber evidence="1">3.11.1.1</ecNumber>
    </recommendedName>
    <alternativeName>
        <fullName evidence="1">Phosphonoacetaldehyde phosphonohydrolase</fullName>
    </alternativeName>
</protein>
<organism>
    <name type="scientific">Salmonella paratyphi A (strain ATCC 9150 / SARB42)</name>
    <dbReference type="NCBI Taxonomy" id="295319"/>
    <lineage>
        <taxon>Bacteria</taxon>
        <taxon>Pseudomonadati</taxon>
        <taxon>Pseudomonadota</taxon>
        <taxon>Gammaproteobacteria</taxon>
        <taxon>Enterobacterales</taxon>
        <taxon>Enterobacteriaceae</taxon>
        <taxon>Salmonella</taxon>
    </lineage>
</organism>